<organism>
    <name type="scientific">Escherichia coli O9:H4 (strain HS)</name>
    <dbReference type="NCBI Taxonomy" id="331112"/>
    <lineage>
        <taxon>Bacteria</taxon>
        <taxon>Pseudomonadati</taxon>
        <taxon>Pseudomonadota</taxon>
        <taxon>Gammaproteobacteria</taxon>
        <taxon>Enterobacterales</taxon>
        <taxon>Enterobacteriaceae</taxon>
        <taxon>Escherichia</taxon>
    </lineage>
</organism>
<sequence>MRLIPLTTAEQVGKWAARHIVNRINAFKPTADRPFVLGLPTGGTPMTTYKALVEMHKAGQVSFKHVVTFNMDEYVGLPKEHPESYYSFMHRNFFDHVDIPAENINLLNGNAPDIDAECRQYEEKIRSYGKIHLFMGGVGNDGHIAFNEPASSLASRTRIKTLTHDTRVANSRFFDNDVNQVPKYALTVGVGTLLDAEEVMILVLGSQKALALQAAVEGCVNHMWTISCLQLHPKAIMVCDEPSTMELKVKTLRYFNELEAENIKGL</sequence>
<accession>A7ZXT7</accession>
<gene>
    <name evidence="1" type="primary">nagB</name>
    <name type="ordered locus">EcHS_A0722</name>
</gene>
<name>NAGB_ECOHS</name>
<dbReference type="EC" id="3.5.99.6" evidence="1"/>
<dbReference type="EMBL" id="CP000802">
    <property type="protein sequence ID" value="ABV05091.1"/>
    <property type="molecule type" value="Genomic_DNA"/>
</dbReference>
<dbReference type="RefSeq" id="WP_001237072.1">
    <property type="nucleotide sequence ID" value="NC_009800.1"/>
</dbReference>
<dbReference type="SMR" id="A7ZXT7"/>
<dbReference type="GeneID" id="93776807"/>
<dbReference type="KEGG" id="ecx:EcHS_A0722"/>
<dbReference type="HOGENOM" id="CLU_049611_0_1_6"/>
<dbReference type="UniPathway" id="UPA00629">
    <property type="reaction ID" value="UER00684"/>
</dbReference>
<dbReference type="GO" id="GO:0005829">
    <property type="term" value="C:cytosol"/>
    <property type="evidence" value="ECO:0007669"/>
    <property type="project" value="TreeGrafter"/>
</dbReference>
<dbReference type="GO" id="GO:0004342">
    <property type="term" value="F:glucosamine-6-phosphate deaminase activity"/>
    <property type="evidence" value="ECO:0007669"/>
    <property type="project" value="UniProtKB-UniRule"/>
</dbReference>
<dbReference type="GO" id="GO:0042802">
    <property type="term" value="F:identical protein binding"/>
    <property type="evidence" value="ECO:0007669"/>
    <property type="project" value="TreeGrafter"/>
</dbReference>
<dbReference type="GO" id="GO:0005975">
    <property type="term" value="P:carbohydrate metabolic process"/>
    <property type="evidence" value="ECO:0007669"/>
    <property type="project" value="InterPro"/>
</dbReference>
<dbReference type="GO" id="GO:0006043">
    <property type="term" value="P:glucosamine catabolic process"/>
    <property type="evidence" value="ECO:0007669"/>
    <property type="project" value="TreeGrafter"/>
</dbReference>
<dbReference type="GO" id="GO:0006046">
    <property type="term" value="P:N-acetylglucosamine catabolic process"/>
    <property type="evidence" value="ECO:0007669"/>
    <property type="project" value="TreeGrafter"/>
</dbReference>
<dbReference type="GO" id="GO:0019262">
    <property type="term" value="P:N-acetylneuraminate catabolic process"/>
    <property type="evidence" value="ECO:0007669"/>
    <property type="project" value="UniProtKB-UniRule"/>
</dbReference>
<dbReference type="CDD" id="cd01399">
    <property type="entry name" value="GlcN6P_deaminase"/>
    <property type="match status" value="1"/>
</dbReference>
<dbReference type="FunFam" id="3.40.50.1360:FF:000002">
    <property type="entry name" value="Glucosamine-6-phosphate deaminase"/>
    <property type="match status" value="1"/>
</dbReference>
<dbReference type="Gene3D" id="3.40.50.1360">
    <property type="match status" value="1"/>
</dbReference>
<dbReference type="HAMAP" id="MF_01241">
    <property type="entry name" value="GlcN6P_deamin"/>
    <property type="match status" value="1"/>
</dbReference>
<dbReference type="InterPro" id="IPR006148">
    <property type="entry name" value="Glc/Gal-6P_isomerase"/>
</dbReference>
<dbReference type="InterPro" id="IPR004547">
    <property type="entry name" value="Glucosamine6P_isomerase"/>
</dbReference>
<dbReference type="InterPro" id="IPR018321">
    <property type="entry name" value="Glucosamine6P_isomerase_CS"/>
</dbReference>
<dbReference type="InterPro" id="IPR037171">
    <property type="entry name" value="NagB/RpiA_transferase-like"/>
</dbReference>
<dbReference type="NCBIfam" id="TIGR00502">
    <property type="entry name" value="nagB"/>
    <property type="match status" value="1"/>
</dbReference>
<dbReference type="NCBIfam" id="NF001685">
    <property type="entry name" value="PRK00443.1-5"/>
    <property type="match status" value="1"/>
</dbReference>
<dbReference type="PANTHER" id="PTHR11280">
    <property type="entry name" value="GLUCOSAMINE-6-PHOSPHATE ISOMERASE"/>
    <property type="match status" value="1"/>
</dbReference>
<dbReference type="PANTHER" id="PTHR11280:SF5">
    <property type="entry name" value="GLUCOSAMINE-6-PHOSPHATE ISOMERASE"/>
    <property type="match status" value="1"/>
</dbReference>
<dbReference type="Pfam" id="PF01182">
    <property type="entry name" value="Glucosamine_iso"/>
    <property type="match status" value="1"/>
</dbReference>
<dbReference type="SUPFAM" id="SSF100950">
    <property type="entry name" value="NagB/RpiA/CoA transferase-like"/>
    <property type="match status" value="1"/>
</dbReference>
<dbReference type="PROSITE" id="PS01161">
    <property type="entry name" value="GLC_GALNAC_ISOMERASE"/>
    <property type="match status" value="1"/>
</dbReference>
<keyword id="KW-0021">Allosteric enzyme</keyword>
<keyword id="KW-0119">Carbohydrate metabolism</keyword>
<keyword id="KW-1015">Disulfide bond</keyword>
<keyword id="KW-0378">Hydrolase</keyword>
<proteinExistence type="inferred from homology"/>
<feature type="chain" id="PRO_1000066978" description="Glucosamine-6-phosphate deaminase">
    <location>
        <begin position="1"/>
        <end position="266"/>
    </location>
</feature>
<feature type="active site" description="Proton acceptor; for enolization step" evidence="1">
    <location>
        <position position="72"/>
    </location>
</feature>
<feature type="active site" description="For ring-opening step" evidence="1">
    <location>
        <position position="141"/>
    </location>
</feature>
<feature type="active site" description="Proton acceptor; for ring-opening step" evidence="1">
    <location>
        <position position="143"/>
    </location>
</feature>
<feature type="active site" description="For ring-opening step" evidence="1">
    <location>
        <position position="148"/>
    </location>
</feature>
<feature type="site" description="Part of the allosteric site" evidence="1">
    <location>
        <position position="151"/>
    </location>
</feature>
<feature type="site" description="Part of the allosteric site" evidence="1">
    <location>
        <position position="158"/>
    </location>
</feature>
<feature type="site" description="Part of the allosteric site" evidence="1">
    <location>
        <position position="160"/>
    </location>
</feature>
<feature type="site" description="Part of the allosteric site" evidence="1">
    <location>
        <position position="161"/>
    </location>
</feature>
<feature type="site" description="Part of the allosteric site" evidence="1">
    <location>
        <position position="254"/>
    </location>
</feature>
<feature type="disulfide bond" description="Interchain" evidence="1">
    <location>
        <position position="219"/>
    </location>
</feature>
<comment type="function">
    <text evidence="1">Catalyzes the reversible isomerization-deamination of glucosamine 6-phosphate (GlcN6P) to form fructose 6-phosphate (Fru6P) and ammonium ion.</text>
</comment>
<comment type="catalytic activity">
    <reaction evidence="1">
        <text>alpha-D-glucosamine 6-phosphate + H2O = beta-D-fructose 6-phosphate + NH4(+)</text>
        <dbReference type="Rhea" id="RHEA:12172"/>
        <dbReference type="ChEBI" id="CHEBI:15377"/>
        <dbReference type="ChEBI" id="CHEBI:28938"/>
        <dbReference type="ChEBI" id="CHEBI:57634"/>
        <dbReference type="ChEBI" id="CHEBI:75989"/>
        <dbReference type="EC" id="3.5.99.6"/>
    </reaction>
</comment>
<comment type="activity regulation">
    <text evidence="1">Allosterically activated by N-acetylglucosamine 6-phosphate (GlcNAc6P).</text>
</comment>
<comment type="pathway">
    <text evidence="1">Amino-sugar metabolism; N-acetylneuraminate degradation; D-fructose 6-phosphate from N-acetylneuraminate: step 5/5.</text>
</comment>
<comment type="subunit">
    <text evidence="1">Homohexamer; trimer of disulfide-linked dimers.</text>
</comment>
<comment type="similarity">
    <text evidence="1">Belongs to the glucosamine/galactosamine-6-phosphate isomerase family. NagB subfamily.</text>
</comment>
<reference key="1">
    <citation type="journal article" date="2008" name="J. Bacteriol.">
        <title>The pangenome structure of Escherichia coli: comparative genomic analysis of E. coli commensal and pathogenic isolates.</title>
        <authorList>
            <person name="Rasko D.A."/>
            <person name="Rosovitz M.J."/>
            <person name="Myers G.S.A."/>
            <person name="Mongodin E.F."/>
            <person name="Fricke W.F."/>
            <person name="Gajer P."/>
            <person name="Crabtree J."/>
            <person name="Sebaihia M."/>
            <person name="Thomson N.R."/>
            <person name="Chaudhuri R."/>
            <person name="Henderson I.R."/>
            <person name="Sperandio V."/>
            <person name="Ravel J."/>
        </authorList>
    </citation>
    <scope>NUCLEOTIDE SEQUENCE [LARGE SCALE GENOMIC DNA]</scope>
    <source>
        <strain>HS</strain>
    </source>
</reference>
<evidence type="ECO:0000255" key="1">
    <source>
        <dbReference type="HAMAP-Rule" id="MF_01241"/>
    </source>
</evidence>
<protein>
    <recommendedName>
        <fullName evidence="1">Glucosamine-6-phosphate deaminase</fullName>
        <ecNumber evidence="1">3.5.99.6</ecNumber>
    </recommendedName>
    <alternativeName>
        <fullName evidence="1">GlcN6P deaminase</fullName>
        <shortName evidence="1">GNPDA</shortName>
    </alternativeName>
    <alternativeName>
        <fullName evidence="1">Glucosamine-6-phosphate isomerase</fullName>
    </alternativeName>
</protein>